<gene>
    <name type="ordered locus">VACWR147</name>
</gene>
<organismHost>
    <name type="scientific">Bos taurus</name>
    <name type="common">Bovine</name>
    <dbReference type="NCBI Taxonomy" id="9913"/>
</organismHost>
<evidence type="ECO:0000255" key="1"/>
<proteinExistence type="predicted"/>
<name>ATI4_VACCW</name>
<protein>
    <recommendedName>
        <fullName>27 kDa A-type inclusion protein</fullName>
    </recommendedName>
</protein>
<feature type="chain" id="PRO_0000418526" description="27 kDa A-type inclusion protein">
    <location>
        <begin position="1"/>
        <end position="227"/>
    </location>
</feature>
<feature type="coiled-coil region" evidence="1">
    <location>
        <begin position="4"/>
        <end position="210"/>
    </location>
</feature>
<dbReference type="EMBL" id="AY243312">
    <property type="protein sequence ID" value="AAO89426.1"/>
    <property type="molecule type" value="Genomic_DNA"/>
</dbReference>
<dbReference type="RefSeq" id="YP_233029.1">
    <property type="nucleotide sequence ID" value="NC_006998.1"/>
</dbReference>
<dbReference type="SMR" id="Q80HU9"/>
<dbReference type="DNASU" id="3707677"/>
<dbReference type="GeneID" id="3707677"/>
<dbReference type="KEGG" id="vg:3707677"/>
<dbReference type="Proteomes" id="UP000000344">
    <property type="component" value="Genome"/>
</dbReference>
<dbReference type="GO" id="GO:0016032">
    <property type="term" value="P:viral process"/>
    <property type="evidence" value="ECO:0007669"/>
    <property type="project" value="InterPro"/>
</dbReference>
<dbReference type="Gene3D" id="1.10.287.1490">
    <property type="match status" value="1"/>
</dbReference>
<dbReference type="InterPro" id="IPR007596">
    <property type="entry name" value="Pox_A_type_inc"/>
</dbReference>
<dbReference type="Pfam" id="PF04508">
    <property type="entry name" value="Pox_A_type_inc"/>
    <property type="match status" value="6"/>
</dbReference>
<organism>
    <name type="scientific">Vaccinia virus (strain Western Reserve)</name>
    <name type="common">VACV</name>
    <name type="synonym">Vaccinia virus (strain WR)</name>
    <dbReference type="NCBI Taxonomy" id="10254"/>
    <lineage>
        <taxon>Viruses</taxon>
        <taxon>Varidnaviria</taxon>
        <taxon>Bamfordvirae</taxon>
        <taxon>Nucleocytoviricota</taxon>
        <taxon>Pokkesviricetes</taxon>
        <taxon>Chitovirales</taxon>
        <taxon>Poxviridae</taxon>
        <taxon>Chordopoxvirinae</taxon>
        <taxon>Orthopoxvirus</taxon>
        <taxon>Vaccinia virus</taxon>
    </lineage>
</organism>
<keyword id="KW-0175">Coiled coil</keyword>
<keyword id="KW-1185">Reference proteome</keyword>
<accession>Q80HU9</accession>
<sequence length="227" mass="27108">MKPMPKQREMRRLRDRISDIERQLSDCRRNNESNADMEREMQRLRDRIMDLDRQLNECKRNGNGTSSEEVNRLKTRIRNLKRSLEICSKDESELYSAYKTKLGRAREQISNLQESLRRERESDKTDSYYRRELTRERNKIVELEKELNKCFDAKYIDEINSKKTRISDLERQLAACKSNGGSNGNMDQYKREIESLKRELAECRRGNNGSHSDCKYYDEEARDCVKS</sequence>
<reference key="1">
    <citation type="submission" date="2003-02" db="EMBL/GenBank/DDBJ databases">
        <title>Sequencing of the coding region of Vaccinia-WR to an average 9-fold redundancy and an error rate of 0.16/10kb.</title>
        <authorList>
            <person name="Esposito J.J."/>
            <person name="Frace A.M."/>
            <person name="Sammons S.A."/>
            <person name="Olsen-Rasmussen M."/>
            <person name="Osborne J."/>
            <person name="Wohlhueter R."/>
        </authorList>
    </citation>
    <scope>NUCLEOTIDE SEQUENCE [LARGE SCALE GENOMIC DNA]</scope>
</reference>